<protein>
    <recommendedName>
        <fullName evidence="1">Small ribosomal subunit protein uS11</fullName>
    </recommendedName>
    <alternativeName>
        <fullName evidence="2">30S ribosomal protein S11</fullName>
    </alternativeName>
</protein>
<feature type="chain" id="PRO_0000294809" description="Small ribosomal subunit protein uS11">
    <location>
        <begin position="1"/>
        <end position="120"/>
    </location>
</feature>
<sequence>MREKKSIVSGNAHVIVTFNNVYISVTDHQGNVQGWASSGSVGFKGNKKSTAYAAQSVATTLMTKLKRIGLKILNVHLSGSNPIREAALRAIRNSGIVIISLQDMTPVPHNGVRLRRRRRV</sequence>
<proteinExistence type="inferred from homology"/>
<dbReference type="EMBL" id="CP000237">
    <property type="protein sequence ID" value="ABD45907.1"/>
    <property type="molecule type" value="Genomic_DNA"/>
</dbReference>
<dbReference type="RefSeq" id="WP_011451685.1">
    <property type="nucleotide sequence ID" value="NC_007798.1"/>
</dbReference>
<dbReference type="SMR" id="Q2GEB7"/>
<dbReference type="STRING" id="222891.NSE_0288"/>
<dbReference type="KEGG" id="nse:NSE_0288"/>
<dbReference type="eggNOG" id="COG0100">
    <property type="taxonomic scope" value="Bacteria"/>
</dbReference>
<dbReference type="HOGENOM" id="CLU_072439_5_3_5"/>
<dbReference type="OrthoDB" id="9806415at2"/>
<dbReference type="Proteomes" id="UP000001942">
    <property type="component" value="Chromosome"/>
</dbReference>
<dbReference type="GO" id="GO:1990904">
    <property type="term" value="C:ribonucleoprotein complex"/>
    <property type="evidence" value="ECO:0007669"/>
    <property type="project" value="UniProtKB-KW"/>
</dbReference>
<dbReference type="GO" id="GO:0005840">
    <property type="term" value="C:ribosome"/>
    <property type="evidence" value="ECO:0007669"/>
    <property type="project" value="UniProtKB-KW"/>
</dbReference>
<dbReference type="GO" id="GO:0019843">
    <property type="term" value="F:rRNA binding"/>
    <property type="evidence" value="ECO:0007669"/>
    <property type="project" value="UniProtKB-UniRule"/>
</dbReference>
<dbReference type="GO" id="GO:0003735">
    <property type="term" value="F:structural constituent of ribosome"/>
    <property type="evidence" value="ECO:0007669"/>
    <property type="project" value="InterPro"/>
</dbReference>
<dbReference type="GO" id="GO:0006412">
    <property type="term" value="P:translation"/>
    <property type="evidence" value="ECO:0007669"/>
    <property type="project" value="UniProtKB-UniRule"/>
</dbReference>
<dbReference type="Gene3D" id="3.30.420.80">
    <property type="entry name" value="Ribosomal protein S11"/>
    <property type="match status" value="1"/>
</dbReference>
<dbReference type="HAMAP" id="MF_01310">
    <property type="entry name" value="Ribosomal_uS11"/>
    <property type="match status" value="1"/>
</dbReference>
<dbReference type="InterPro" id="IPR001971">
    <property type="entry name" value="Ribosomal_uS11"/>
</dbReference>
<dbReference type="InterPro" id="IPR019981">
    <property type="entry name" value="Ribosomal_uS11_bac-type"/>
</dbReference>
<dbReference type="InterPro" id="IPR018102">
    <property type="entry name" value="Ribosomal_uS11_CS"/>
</dbReference>
<dbReference type="InterPro" id="IPR036967">
    <property type="entry name" value="Ribosomal_uS11_sf"/>
</dbReference>
<dbReference type="NCBIfam" id="NF003698">
    <property type="entry name" value="PRK05309.1"/>
    <property type="match status" value="1"/>
</dbReference>
<dbReference type="NCBIfam" id="TIGR03632">
    <property type="entry name" value="uS11_bact"/>
    <property type="match status" value="1"/>
</dbReference>
<dbReference type="PANTHER" id="PTHR11759">
    <property type="entry name" value="40S RIBOSOMAL PROTEIN S14/30S RIBOSOMAL PROTEIN S11"/>
    <property type="match status" value="1"/>
</dbReference>
<dbReference type="Pfam" id="PF00411">
    <property type="entry name" value="Ribosomal_S11"/>
    <property type="match status" value="1"/>
</dbReference>
<dbReference type="PIRSF" id="PIRSF002131">
    <property type="entry name" value="Ribosomal_S11"/>
    <property type="match status" value="1"/>
</dbReference>
<dbReference type="SUPFAM" id="SSF53137">
    <property type="entry name" value="Translational machinery components"/>
    <property type="match status" value="1"/>
</dbReference>
<dbReference type="PROSITE" id="PS00054">
    <property type="entry name" value="RIBOSOMAL_S11"/>
    <property type="match status" value="1"/>
</dbReference>
<keyword id="KW-0687">Ribonucleoprotein</keyword>
<keyword id="KW-0689">Ribosomal protein</keyword>
<keyword id="KW-0694">RNA-binding</keyword>
<keyword id="KW-0699">rRNA-binding</keyword>
<evidence type="ECO:0000255" key="1">
    <source>
        <dbReference type="HAMAP-Rule" id="MF_01310"/>
    </source>
</evidence>
<evidence type="ECO:0000305" key="2"/>
<organism>
    <name type="scientific">Neorickettsia sennetsu (strain ATCC VR-367 / Miyayama)</name>
    <name type="common">Ehrlichia sennetsu</name>
    <dbReference type="NCBI Taxonomy" id="222891"/>
    <lineage>
        <taxon>Bacteria</taxon>
        <taxon>Pseudomonadati</taxon>
        <taxon>Pseudomonadota</taxon>
        <taxon>Alphaproteobacteria</taxon>
        <taxon>Rickettsiales</taxon>
        <taxon>Anaplasmataceae</taxon>
        <taxon>Neorickettsia</taxon>
    </lineage>
</organism>
<name>RS11_NEOSM</name>
<comment type="function">
    <text evidence="1">Located on the platform of the 30S subunit, it bridges several disparate RNA helices of the 16S rRNA. Forms part of the Shine-Dalgarno cleft in the 70S ribosome.</text>
</comment>
<comment type="subunit">
    <text evidence="1">Part of the 30S ribosomal subunit. Interacts with proteins S7 and S18. Binds to IF-3.</text>
</comment>
<comment type="similarity">
    <text evidence="1">Belongs to the universal ribosomal protein uS11 family.</text>
</comment>
<reference key="1">
    <citation type="journal article" date="2006" name="PLoS Genet.">
        <title>Comparative genomics of emerging human ehrlichiosis agents.</title>
        <authorList>
            <person name="Dunning Hotopp J.C."/>
            <person name="Lin M."/>
            <person name="Madupu R."/>
            <person name="Crabtree J."/>
            <person name="Angiuoli S.V."/>
            <person name="Eisen J.A."/>
            <person name="Seshadri R."/>
            <person name="Ren Q."/>
            <person name="Wu M."/>
            <person name="Utterback T.R."/>
            <person name="Smith S."/>
            <person name="Lewis M."/>
            <person name="Khouri H."/>
            <person name="Zhang C."/>
            <person name="Niu H."/>
            <person name="Lin Q."/>
            <person name="Ohashi N."/>
            <person name="Zhi N."/>
            <person name="Nelson W.C."/>
            <person name="Brinkac L.M."/>
            <person name="Dodson R.J."/>
            <person name="Rosovitz M.J."/>
            <person name="Sundaram J.P."/>
            <person name="Daugherty S.C."/>
            <person name="Davidsen T."/>
            <person name="Durkin A.S."/>
            <person name="Gwinn M.L."/>
            <person name="Haft D.H."/>
            <person name="Selengut J.D."/>
            <person name="Sullivan S.A."/>
            <person name="Zafar N."/>
            <person name="Zhou L."/>
            <person name="Benahmed F."/>
            <person name="Forberger H."/>
            <person name="Halpin R."/>
            <person name="Mulligan S."/>
            <person name="Robinson J."/>
            <person name="White O."/>
            <person name="Rikihisa Y."/>
            <person name="Tettelin H."/>
        </authorList>
    </citation>
    <scope>NUCLEOTIDE SEQUENCE [LARGE SCALE GENOMIC DNA]</scope>
    <source>
        <strain>ATCC VR-367 / Miyayama</strain>
    </source>
</reference>
<accession>Q2GEB7</accession>
<gene>
    <name evidence="1" type="primary">rpsK</name>
    <name type="ordered locus">NSE_0288</name>
</gene>